<geneLocation type="chloroplast"/>
<keyword id="KW-0150">Chloroplast</keyword>
<keyword id="KW-0472">Membrane</keyword>
<keyword id="KW-0520">NAD</keyword>
<keyword id="KW-0521">NADP</keyword>
<keyword id="KW-0934">Plastid</keyword>
<keyword id="KW-0618">Plastoquinone</keyword>
<keyword id="KW-0874">Quinone</keyword>
<keyword id="KW-0793">Thylakoid</keyword>
<keyword id="KW-1278">Translocase</keyword>
<keyword id="KW-0812">Transmembrane</keyword>
<keyword id="KW-1133">Transmembrane helix</keyword>
<keyword id="KW-0813">Transport</keyword>
<comment type="function">
    <text evidence="1">NDH shuttles electrons from NAD(P)H:plastoquinone, via FMN and iron-sulfur (Fe-S) centers, to quinones in the photosynthetic chain and possibly in a chloroplast respiratory chain. The immediate electron acceptor for the enzyme in this species is believed to be plastoquinone. Couples the redox reaction to proton translocation, and thus conserves the redox energy in a proton gradient (By similarity).</text>
</comment>
<comment type="catalytic activity">
    <reaction>
        <text>a plastoquinone + NADH + (n+1) H(+)(in) = a plastoquinol + NAD(+) + n H(+)(out)</text>
        <dbReference type="Rhea" id="RHEA:42608"/>
        <dbReference type="Rhea" id="RHEA-COMP:9561"/>
        <dbReference type="Rhea" id="RHEA-COMP:9562"/>
        <dbReference type="ChEBI" id="CHEBI:15378"/>
        <dbReference type="ChEBI" id="CHEBI:17757"/>
        <dbReference type="ChEBI" id="CHEBI:57540"/>
        <dbReference type="ChEBI" id="CHEBI:57945"/>
        <dbReference type="ChEBI" id="CHEBI:62192"/>
    </reaction>
</comment>
<comment type="catalytic activity">
    <reaction>
        <text>a plastoquinone + NADPH + (n+1) H(+)(in) = a plastoquinol + NADP(+) + n H(+)(out)</text>
        <dbReference type="Rhea" id="RHEA:42612"/>
        <dbReference type="Rhea" id="RHEA-COMP:9561"/>
        <dbReference type="Rhea" id="RHEA-COMP:9562"/>
        <dbReference type="ChEBI" id="CHEBI:15378"/>
        <dbReference type="ChEBI" id="CHEBI:17757"/>
        <dbReference type="ChEBI" id="CHEBI:57783"/>
        <dbReference type="ChEBI" id="CHEBI:58349"/>
        <dbReference type="ChEBI" id="CHEBI:62192"/>
    </reaction>
</comment>
<comment type="subunit">
    <text evidence="1">NDH is composed of at least 16 different subunits, 5 of which are encoded in the nucleus.</text>
</comment>
<comment type="subcellular location">
    <subcellularLocation>
        <location evidence="1">Plastid</location>
        <location evidence="1">Chloroplast thylakoid membrane</location>
        <topology evidence="1">Multi-pass membrane protein</topology>
    </subcellularLocation>
</comment>
<comment type="similarity">
    <text evidence="3">Belongs to the complex I subunit 5 family.</text>
</comment>
<organism>
    <name type="scientific">Digitalis grandiflora</name>
    <name type="common">Yellow foxglove</name>
    <dbReference type="NCBI Taxonomy" id="38791"/>
    <lineage>
        <taxon>Eukaryota</taxon>
        <taxon>Viridiplantae</taxon>
        <taxon>Streptophyta</taxon>
        <taxon>Embryophyta</taxon>
        <taxon>Tracheophyta</taxon>
        <taxon>Spermatophyta</taxon>
        <taxon>Magnoliopsida</taxon>
        <taxon>eudicotyledons</taxon>
        <taxon>Gunneridae</taxon>
        <taxon>Pentapetalae</taxon>
        <taxon>asterids</taxon>
        <taxon>lamiids</taxon>
        <taxon>Lamiales</taxon>
        <taxon>Plantaginaceae</taxon>
        <taxon>Digitalideae</taxon>
        <taxon>Digitalis</taxon>
    </lineage>
</organism>
<feature type="chain" id="PRO_0000118182" description="NAD(P)H-quinone oxidoreductase subunit 5, chloroplastic">
    <location>
        <begin position="1" status="less than"/>
        <end position="699" status="greater than"/>
    </location>
</feature>
<feature type="transmembrane region" description="Helical" evidence="2">
    <location>
        <begin position="1"/>
        <end position="21"/>
    </location>
</feature>
<feature type="transmembrane region" description="Helical" evidence="2">
    <location>
        <begin position="32"/>
        <end position="52"/>
    </location>
</feature>
<feature type="transmembrane region" description="Helical" evidence="2">
    <location>
        <begin position="81"/>
        <end position="101"/>
    </location>
</feature>
<feature type="transmembrane region" description="Helical" evidence="2">
    <location>
        <begin position="117"/>
        <end position="137"/>
    </location>
</feature>
<feature type="transmembrane region" description="Helical" evidence="2">
    <location>
        <begin position="139"/>
        <end position="159"/>
    </location>
</feature>
<feature type="transmembrane region" description="Helical" evidence="2">
    <location>
        <begin position="177"/>
        <end position="197"/>
    </location>
</feature>
<feature type="transmembrane region" description="Helical" evidence="2">
    <location>
        <begin position="216"/>
        <end position="236"/>
    </location>
</feature>
<feature type="transmembrane region" description="Helical" evidence="2">
    <location>
        <begin position="250"/>
        <end position="270"/>
    </location>
</feature>
<feature type="transmembrane region" description="Helical" evidence="2">
    <location>
        <begin position="272"/>
        <end position="292"/>
    </location>
</feature>
<feature type="transmembrane region" description="Helical" evidence="2">
    <location>
        <begin position="319"/>
        <end position="339"/>
    </location>
</feature>
<feature type="transmembrane region" description="Helical" evidence="2">
    <location>
        <begin position="346"/>
        <end position="366"/>
    </location>
</feature>
<feature type="transmembrane region" description="Helical" evidence="2">
    <location>
        <begin position="388"/>
        <end position="408"/>
    </location>
</feature>
<feature type="transmembrane region" description="Helical" evidence="2">
    <location>
        <begin position="417"/>
        <end position="437"/>
    </location>
</feature>
<feature type="transmembrane region" description="Helical" evidence="2">
    <location>
        <begin position="539"/>
        <end position="559"/>
    </location>
</feature>
<feature type="transmembrane region" description="Helical" evidence="2">
    <location>
        <begin position="598"/>
        <end position="618"/>
    </location>
</feature>
<feature type="non-terminal residue">
    <location>
        <position position="1"/>
    </location>
</feature>
<feature type="non-terminal residue">
    <location>
        <position position="699"/>
    </location>
</feature>
<reference key="1">
    <citation type="journal article" date="1995" name="Ann. Mo. Bot. Gard.">
        <title>Evidence for the polyphyly of the Scrophulariaceae based on chloroplast rbcL and ndhF sequences.</title>
        <authorList>
            <person name="Olmstead R.G."/>
            <person name="Reeves P.A."/>
        </authorList>
    </citation>
    <scope>NUCLEOTIDE SEQUENCE [GENOMIC DNA]</scope>
</reference>
<gene>
    <name type="primary">ndhF</name>
</gene>
<protein>
    <recommendedName>
        <fullName>NAD(P)H-quinone oxidoreductase subunit 5, chloroplastic</fullName>
        <ecNumber>7.1.1.-</ecNumber>
    </recommendedName>
    <alternativeName>
        <fullName>NAD(P)H dehydrogenase subunit 5</fullName>
    </alternativeName>
    <alternativeName>
        <fullName>NADH-plastoquinone oxidoreductase subunit 5</fullName>
    </alternativeName>
</protein>
<name>NU5C_DIGGR</name>
<sequence>WIIPFVPLPVPMLIGVGLLLFPIXTNKLRRMWAFPSILLLSIVMIFSTNLSIQQINSNSIYQYVWSWTLDNDFSLELGCLIDPLTSIMSMLITIVGITVLIYSDNYMAHDQGYLRFFAYMSFFSTSMLGLVTSSNLIQIYIFWELVGVCSYLLIGFWFTRPLAANACQKAFVTNRVGDFGLLLGILGFYWITGSFEFRDLFEIFNNLIVNNQVNYLFVTLCAALLFAGAVAKSAQFPLHVWLPDAMEGPTPISALIHAATMVAEGIFLVARLLPLFIVIPYIMNFISLIGIITVLLGATLALAQKDIKRGLAYSTMSQLGYMMLALGMGSYRSALFHLITHAYSKALLFLGSGSVIHSMETIVGYSPEKSQNMVLMGGLRKYVPITKISFLLGTLSLCGIPPLACFWSKDEILNDSWLYSPIFAIIAWATAGLTAFYMFRIYLLTFEGHLNVYFQNYSGKKNTAFYSISIWGKGCSKRINKNFRLLRINNQSSSFFLKKTYRSDENLKKRNGGRPFINLIRFENKKARLYPYESDNTMLFPLLILVLFTLFVGYLGISFNQEARDLDILSKWLAPSIDLLHQKSRDLTDWYEFLKDAIFSVSIAYFGILLASLLYKPIFASFKNFDLINSFVKTGPKRSRWDKILTLLYNWSHNRAYIDVFYTTSFTGSIRGLSQLTHFFDTQVIDGITNGVGVMSFFV</sequence>
<accession>Q32131</accession>
<evidence type="ECO:0000250" key="1"/>
<evidence type="ECO:0000255" key="2"/>
<evidence type="ECO:0000305" key="3"/>
<dbReference type="EC" id="7.1.1.-"/>
<dbReference type="EMBL" id="L36399">
    <property type="protein sequence ID" value="AAA84203.1"/>
    <property type="molecule type" value="Genomic_DNA"/>
</dbReference>
<dbReference type="GO" id="GO:0009535">
    <property type="term" value="C:chloroplast thylakoid membrane"/>
    <property type="evidence" value="ECO:0007669"/>
    <property type="project" value="UniProtKB-SubCell"/>
</dbReference>
<dbReference type="GO" id="GO:0008137">
    <property type="term" value="F:NADH dehydrogenase (ubiquinone) activity"/>
    <property type="evidence" value="ECO:0007669"/>
    <property type="project" value="InterPro"/>
</dbReference>
<dbReference type="GO" id="GO:0048038">
    <property type="term" value="F:quinone binding"/>
    <property type="evidence" value="ECO:0007669"/>
    <property type="project" value="UniProtKB-KW"/>
</dbReference>
<dbReference type="GO" id="GO:0042773">
    <property type="term" value="P:ATP synthesis coupled electron transport"/>
    <property type="evidence" value="ECO:0007669"/>
    <property type="project" value="InterPro"/>
</dbReference>
<dbReference type="GO" id="GO:0015990">
    <property type="term" value="P:electron transport coupled proton transport"/>
    <property type="evidence" value="ECO:0007669"/>
    <property type="project" value="TreeGrafter"/>
</dbReference>
<dbReference type="InterPro" id="IPR002128">
    <property type="entry name" value="NADH_UbQ_OxRdtase_chlpt_su5_C"/>
</dbReference>
<dbReference type="InterPro" id="IPR018393">
    <property type="entry name" value="NADHpl_OxRdtase_5_subgr"/>
</dbReference>
<dbReference type="InterPro" id="IPR001750">
    <property type="entry name" value="ND/Mrp_TM"/>
</dbReference>
<dbReference type="InterPro" id="IPR003945">
    <property type="entry name" value="NU5C-like"/>
</dbReference>
<dbReference type="InterPro" id="IPR001516">
    <property type="entry name" value="Proton_antipo_N"/>
</dbReference>
<dbReference type="NCBIfam" id="TIGR01974">
    <property type="entry name" value="NDH_I_L"/>
    <property type="match status" value="1"/>
</dbReference>
<dbReference type="NCBIfam" id="NF005141">
    <property type="entry name" value="PRK06590.1"/>
    <property type="match status" value="1"/>
</dbReference>
<dbReference type="PANTHER" id="PTHR42829">
    <property type="entry name" value="NADH-UBIQUINONE OXIDOREDUCTASE CHAIN 5"/>
    <property type="match status" value="1"/>
</dbReference>
<dbReference type="PANTHER" id="PTHR42829:SF2">
    <property type="entry name" value="NADH-UBIQUINONE OXIDOREDUCTASE CHAIN 5"/>
    <property type="match status" value="1"/>
</dbReference>
<dbReference type="Pfam" id="PF01010">
    <property type="entry name" value="Proton_antipo_C"/>
    <property type="match status" value="1"/>
</dbReference>
<dbReference type="Pfam" id="PF00361">
    <property type="entry name" value="Proton_antipo_M"/>
    <property type="match status" value="1"/>
</dbReference>
<dbReference type="Pfam" id="PF00662">
    <property type="entry name" value="Proton_antipo_N"/>
    <property type="match status" value="1"/>
</dbReference>
<dbReference type="PRINTS" id="PR01434">
    <property type="entry name" value="NADHDHGNASE5"/>
</dbReference>
<dbReference type="PRINTS" id="PR01435">
    <property type="entry name" value="NPOXDRDTASE5"/>
</dbReference>
<proteinExistence type="inferred from homology"/>